<reference key="1">
    <citation type="journal article" date="2003" name="Proc. Natl. Acad. Sci. U.S.A.">
        <title>The genome sequence of Blochmannia floridanus: comparative analysis of reduced genomes.</title>
        <authorList>
            <person name="Gil R."/>
            <person name="Silva F.J."/>
            <person name="Zientz E."/>
            <person name="Delmotte F."/>
            <person name="Gonzalez-Candelas F."/>
            <person name="Latorre A."/>
            <person name="Rausell C."/>
            <person name="Kamerbeek J."/>
            <person name="Gadau J."/>
            <person name="Hoelldobler B."/>
            <person name="van Ham R.C.H.J."/>
            <person name="Gross R."/>
            <person name="Moya A."/>
        </authorList>
    </citation>
    <scope>NUCLEOTIDE SEQUENCE [LARGE SCALE GENOMIC DNA]</scope>
</reference>
<accession>Q7VR52</accession>
<name>SYY_BLOFL</name>
<protein>
    <recommendedName>
        <fullName evidence="1">Tyrosine--tRNA ligase</fullName>
        <ecNumber evidence="1">6.1.1.1</ecNumber>
    </recommendedName>
    <alternativeName>
        <fullName evidence="1">Tyrosyl-tRNA synthetase</fullName>
        <shortName evidence="1">TyrRS</shortName>
    </alternativeName>
</protein>
<proteinExistence type="inferred from homology"/>
<keyword id="KW-0030">Aminoacyl-tRNA synthetase</keyword>
<keyword id="KW-0067">ATP-binding</keyword>
<keyword id="KW-0963">Cytoplasm</keyword>
<keyword id="KW-0436">Ligase</keyword>
<keyword id="KW-0547">Nucleotide-binding</keyword>
<keyword id="KW-0648">Protein biosynthesis</keyword>
<keyword id="KW-1185">Reference proteome</keyword>
<keyword id="KW-0694">RNA-binding</keyword>
<evidence type="ECO:0000255" key="1">
    <source>
        <dbReference type="HAMAP-Rule" id="MF_02006"/>
    </source>
</evidence>
<organism>
    <name type="scientific">Blochmanniella floridana</name>
    <dbReference type="NCBI Taxonomy" id="203907"/>
    <lineage>
        <taxon>Bacteria</taxon>
        <taxon>Pseudomonadati</taxon>
        <taxon>Pseudomonadota</taxon>
        <taxon>Gammaproteobacteria</taxon>
        <taxon>Enterobacterales</taxon>
        <taxon>Enterobacteriaceae</taxon>
        <taxon>ant endosymbionts</taxon>
        <taxon>Candidatus Blochmanniella</taxon>
    </lineage>
</organism>
<sequence>MIDNIIDYLYERGSIAQITDRKKLNAVLNSQPITLYCGFDPTADSLHIGHLAPLLCLKRFQKAGHRPLILLGGATGLIGDPSFKDSERKLQSFNTTQKWIKKIKLQIALFIDCNSNNASQAHIIDNYSWFSSMNILTFLRDIGKFFSINKMINKDIIKKRLKNDNYGISYTEFSYNLMQSYDFAHIYKHYDAILQIGGSDQWGNIISGIDLIKRMYKKNAYGLTVPLLTNFNNIKFGKTEKNTIWLDPEKTSPYQFYQYWINIDDKSAYHFLKIFTDISVQDINSFKNRDHSYSQAQYILAENMTQLVHGKRGLNIAQRISQNLFSYNILKLTLNDFHQLIQDGIPNIILETNTSLQEALTKSKLATSRSQARYFIKSNAITINAHKQSKIEYIFQDSDRIYNLYTLLKRGKKNYCLIQWNI</sequence>
<feature type="chain" id="PRO_0000234684" description="Tyrosine--tRNA ligase">
    <location>
        <begin position="1"/>
        <end position="422"/>
    </location>
</feature>
<feature type="domain" description="S4 RNA-binding" evidence="1">
    <location>
        <begin position="354"/>
        <end position="411"/>
    </location>
</feature>
<feature type="short sequence motif" description="'HIGH' region">
    <location>
        <begin position="41"/>
        <end position="50"/>
    </location>
</feature>
<feature type="short sequence motif" description="'KMSKS' region">
    <location>
        <begin position="235"/>
        <end position="239"/>
    </location>
</feature>
<feature type="binding site" evidence="1">
    <location>
        <position position="36"/>
    </location>
    <ligand>
        <name>L-tyrosine</name>
        <dbReference type="ChEBI" id="CHEBI:58315"/>
    </ligand>
</feature>
<feature type="binding site" evidence="1">
    <location>
        <position position="175"/>
    </location>
    <ligand>
        <name>L-tyrosine</name>
        <dbReference type="ChEBI" id="CHEBI:58315"/>
    </ligand>
</feature>
<feature type="binding site" evidence="1">
    <location>
        <position position="179"/>
    </location>
    <ligand>
        <name>L-tyrosine</name>
        <dbReference type="ChEBI" id="CHEBI:58315"/>
    </ligand>
</feature>
<feature type="binding site" evidence="1">
    <location>
        <position position="238"/>
    </location>
    <ligand>
        <name>ATP</name>
        <dbReference type="ChEBI" id="CHEBI:30616"/>
    </ligand>
</feature>
<dbReference type="EC" id="6.1.1.1" evidence="1"/>
<dbReference type="EMBL" id="BX248583">
    <property type="protein sequence ID" value="CAD83437.1"/>
    <property type="molecule type" value="Genomic_DNA"/>
</dbReference>
<dbReference type="SMR" id="Q7VR52"/>
<dbReference type="STRING" id="203907.Bfl371"/>
<dbReference type="KEGG" id="bfl:Bfl371"/>
<dbReference type="eggNOG" id="COG0162">
    <property type="taxonomic scope" value="Bacteria"/>
</dbReference>
<dbReference type="HOGENOM" id="CLU_024003_0_3_6"/>
<dbReference type="OrthoDB" id="9804243at2"/>
<dbReference type="Proteomes" id="UP000002192">
    <property type="component" value="Chromosome"/>
</dbReference>
<dbReference type="GO" id="GO:0005829">
    <property type="term" value="C:cytosol"/>
    <property type="evidence" value="ECO:0007669"/>
    <property type="project" value="TreeGrafter"/>
</dbReference>
<dbReference type="GO" id="GO:0005524">
    <property type="term" value="F:ATP binding"/>
    <property type="evidence" value="ECO:0007669"/>
    <property type="project" value="UniProtKB-UniRule"/>
</dbReference>
<dbReference type="GO" id="GO:0003723">
    <property type="term" value="F:RNA binding"/>
    <property type="evidence" value="ECO:0007669"/>
    <property type="project" value="UniProtKB-KW"/>
</dbReference>
<dbReference type="GO" id="GO:0004831">
    <property type="term" value="F:tyrosine-tRNA ligase activity"/>
    <property type="evidence" value="ECO:0007669"/>
    <property type="project" value="UniProtKB-UniRule"/>
</dbReference>
<dbReference type="GO" id="GO:0006437">
    <property type="term" value="P:tyrosyl-tRNA aminoacylation"/>
    <property type="evidence" value="ECO:0007669"/>
    <property type="project" value="UniProtKB-UniRule"/>
</dbReference>
<dbReference type="CDD" id="cd00165">
    <property type="entry name" value="S4"/>
    <property type="match status" value="1"/>
</dbReference>
<dbReference type="CDD" id="cd00805">
    <property type="entry name" value="TyrRS_core"/>
    <property type="match status" value="1"/>
</dbReference>
<dbReference type="FunFam" id="1.10.240.10:FF:000001">
    <property type="entry name" value="Tyrosine--tRNA ligase"/>
    <property type="match status" value="1"/>
</dbReference>
<dbReference type="FunFam" id="3.40.50.620:FF:000008">
    <property type="entry name" value="Tyrosine--tRNA ligase"/>
    <property type="match status" value="1"/>
</dbReference>
<dbReference type="Gene3D" id="3.40.50.620">
    <property type="entry name" value="HUPs"/>
    <property type="match status" value="1"/>
</dbReference>
<dbReference type="Gene3D" id="3.10.290.10">
    <property type="entry name" value="RNA-binding S4 domain"/>
    <property type="match status" value="1"/>
</dbReference>
<dbReference type="Gene3D" id="1.10.240.10">
    <property type="entry name" value="Tyrosyl-Transfer RNA Synthetase"/>
    <property type="match status" value="1"/>
</dbReference>
<dbReference type="HAMAP" id="MF_02006">
    <property type="entry name" value="Tyr_tRNA_synth_type1"/>
    <property type="match status" value="1"/>
</dbReference>
<dbReference type="InterPro" id="IPR001412">
    <property type="entry name" value="aa-tRNA-synth_I_CS"/>
</dbReference>
<dbReference type="InterPro" id="IPR002305">
    <property type="entry name" value="aa-tRNA-synth_Ic"/>
</dbReference>
<dbReference type="InterPro" id="IPR014729">
    <property type="entry name" value="Rossmann-like_a/b/a_fold"/>
</dbReference>
<dbReference type="InterPro" id="IPR002942">
    <property type="entry name" value="S4_RNA-bd"/>
</dbReference>
<dbReference type="InterPro" id="IPR036986">
    <property type="entry name" value="S4_RNA-bd_sf"/>
</dbReference>
<dbReference type="InterPro" id="IPR054608">
    <property type="entry name" value="SYY-like_C"/>
</dbReference>
<dbReference type="InterPro" id="IPR002307">
    <property type="entry name" value="Tyr-tRNA-ligase"/>
</dbReference>
<dbReference type="InterPro" id="IPR024088">
    <property type="entry name" value="Tyr-tRNA-ligase_bac-type"/>
</dbReference>
<dbReference type="InterPro" id="IPR024107">
    <property type="entry name" value="Tyr-tRNA-ligase_bac_1"/>
</dbReference>
<dbReference type="NCBIfam" id="TIGR00234">
    <property type="entry name" value="tyrS"/>
    <property type="match status" value="1"/>
</dbReference>
<dbReference type="PANTHER" id="PTHR11766:SF0">
    <property type="entry name" value="TYROSINE--TRNA LIGASE, MITOCHONDRIAL"/>
    <property type="match status" value="1"/>
</dbReference>
<dbReference type="PANTHER" id="PTHR11766">
    <property type="entry name" value="TYROSYL-TRNA SYNTHETASE"/>
    <property type="match status" value="1"/>
</dbReference>
<dbReference type="Pfam" id="PF22421">
    <property type="entry name" value="SYY_C-terminal"/>
    <property type="match status" value="1"/>
</dbReference>
<dbReference type="Pfam" id="PF00579">
    <property type="entry name" value="tRNA-synt_1b"/>
    <property type="match status" value="1"/>
</dbReference>
<dbReference type="PRINTS" id="PR01040">
    <property type="entry name" value="TRNASYNTHTYR"/>
</dbReference>
<dbReference type="SMART" id="SM00363">
    <property type="entry name" value="S4"/>
    <property type="match status" value="1"/>
</dbReference>
<dbReference type="SUPFAM" id="SSF55174">
    <property type="entry name" value="Alpha-L RNA-binding motif"/>
    <property type="match status" value="1"/>
</dbReference>
<dbReference type="SUPFAM" id="SSF52374">
    <property type="entry name" value="Nucleotidylyl transferase"/>
    <property type="match status" value="1"/>
</dbReference>
<dbReference type="PROSITE" id="PS00178">
    <property type="entry name" value="AA_TRNA_LIGASE_I"/>
    <property type="match status" value="1"/>
</dbReference>
<dbReference type="PROSITE" id="PS50889">
    <property type="entry name" value="S4"/>
    <property type="match status" value="1"/>
</dbReference>
<comment type="function">
    <text evidence="1">Catalyzes the attachment of tyrosine to tRNA(Tyr) in a two-step reaction: tyrosine is first activated by ATP to form Tyr-AMP and then transferred to the acceptor end of tRNA(Tyr).</text>
</comment>
<comment type="catalytic activity">
    <reaction evidence="1">
        <text>tRNA(Tyr) + L-tyrosine + ATP = L-tyrosyl-tRNA(Tyr) + AMP + diphosphate + H(+)</text>
        <dbReference type="Rhea" id="RHEA:10220"/>
        <dbReference type="Rhea" id="RHEA-COMP:9706"/>
        <dbReference type="Rhea" id="RHEA-COMP:9707"/>
        <dbReference type="ChEBI" id="CHEBI:15378"/>
        <dbReference type="ChEBI" id="CHEBI:30616"/>
        <dbReference type="ChEBI" id="CHEBI:33019"/>
        <dbReference type="ChEBI" id="CHEBI:58315"/>
        <dbReference type="ChEBI" id="CHEBI:78442"/>
        <dbReference type="ChEBI" id="CHEBI:78536"/>
        <dbReference type="ChEBI" id="CHEBI:456215"/>
        <dbReference type="EC" id="6.1.1.1"/>
    </reaction>
</comment>
<comment type="subunit">
    <text evidence="1">Homodimer.</text>
</comment>
<comment type="subcellular location">
    <subcellularLocation>
        <location evidence="1">Cytoplasm</location>
    </subcellularLocation>
</comment>
<comment type="similarity">
    <text evidence="1">Belongs to the class-I aminoacyl-tRNA synthetase family. TyrS type 1 subfamily.</text>
</comment>
<gene>
    <name evidence="1" type="primary">tyrS</name>
    <name type="ordered locus">Bfl371</name>
</gene>